<gene>
    <name evidence="1" type="primary">mdh</name>
    <name type="ordered locus">APH_0629</name>
</gene>
<dbReference type="EC" id="1.1.1.37" evidence="1"/>
<dbReference type="EMBL" id="CP000235">
    <property type="protein sequence ID" value="ABD44326.1"/>
    <property type="molecule type" value="Genomic_DNA"/>
</dbReference>
<dbReference type="RefSeq" id="WP_011450737.1">
    <property type="nucleotide sequence ID" value="NC_007797.1"/>
</dbReference>
<dbReference type="SMR" id="Q2GK85"/>
<dbReference type="STRING" id="212042.APH_0629"/>
<dbReference type="PaxDb" id="212042-APH_0629"/>
<dbReference type="EnsemblBacteria" id="ABD44326">
    <property type="protein sequence ID" value="ABD44326"/>
    <property type="gene ID" value="APH_0629"/>
</dbReference>
<dbReference type="GeneID" id="92748280"/>
<dbReference type="KEGG" id="aph:APH_0629"/>
<dbReference type="eggNOG" id="COG0039">
    <property type="taxonomic scope" value="Bacteria"/>
</dbReference>
<dbReference type="HOGENOM" id="CLU_045401_2_1_5"/>
<dbReference type="Proteomes" id="UP000001943">
    <property type="component" value="Chromosome"/>
</dbReference>
<dbReference type="GO" id="GO:0004459">
    <property type="term" value="F:L-lactate dehydrogenase activity"/>
    <property type="evidence" value="ECO:0007669"/>
    <property type="project" value="TreeGrafter"/>
</dbReference>
<dbReference type="GO" id="GO:0030060">
    <property type="term" value="F:L-malate dehydrogenase (NAD+) activity"/>
    <property type="evidence" value="ECO:0007669"/>
    <property type="project" value="UniProtKB-UniRule"/>
</dbReference>
<dbReference type="GO" id="GO:0006089">
    <property type="term" value="P:lactate metabolic process"/>
    <property type="evidence" value="ECO:0007669"/>
    <property type="project" value="TreeGrafter"/>
</dbReference>
<dbReference type="GO" id="GO:0006099">
    <property type="term" value="P:tricarboxylic acid cycle"/>
    <property type="evidence" value="ECO:0007669"/>
    <property type="project" value="UniProtKB-UniRule"/>
</dbReference>
<dbReference type="CDD" id="cd01339">
    <property type="entry name" value="LDH-like_MDH"/>
    <property type="match status" value="1"/>
</dbReference>
<dbReference type="FunFam" id="3.40.50.720:FF:000018">
    <property type="entry name" value="Malate dehydrogenase"/>
    <property type="match status" value="1"/>
</dbReference>
<dbReference type="FunFam" id="3.90.110.10:FF:000004">
    <property type="entry name" value="Malate dehydrogenase"/>
    <property type="match status" value="1"/>
</dbReference>
<dbReference type="Gene3D" id="3.90.110.10">
    <property type="entry name" value="Lactate dehydrogenase/glycoside hydrolase, family 4, C-terminal"/>
    <property type="match status" value="1"/>
</dbReference>
<dbReference type="Gene3D" id="3.40.50.720">
    <property type="entry name" value="NAD(P)-binding Rossmann-like Domain"/>
    <property type="match status" value="1"/>
</dbReference>
<dbReference type="HAMAP" id="MF_00487">
    <property type="entry name" value="Malate_dehydrog_3"/>
    <property type="match status" value="1"/>
</dbReference>
<dbReference type="InterPro" id="IPR001557">
    <property type="entry name" value="L-lactate/malate_DH"/>
</dbReference>
<dbReference type="InterPro" id="IPR022383">
    <property type="entry name" value="Lactate/malate_DH_C"/>
</dbReference>
<dbReference type="InterPro" id="IPR001236">
    <property type="entry name" value="Lactate/malate_DH_N"/>
</dbReference>
<dbReference type="InterPro" id="IPR015955">
    <property type="entry name" value="Lactate_DH/Glyco_Ohase_4_C"/>
</dbReference>
<dbReference type="InterPro" id="IPR011275">
    <property type="entry name" value="Malate_DH_type3"/>
</dbReference>
<dbReference type="InterPro" id="IPR036291">
    <property type="entry name" value="NAD(P)-bd_dom_sf"/>
</dbReference>
<dbReference type="NCBIfam" id="TIGR01763">
    <property type="entry name" value="MalateDH_bact"/>
    <property type="match status" value="1"/>
</dbReference>
<dbReference type="NCBIfam" id="NF004863">
    <property type="entry name" value="PRK06223.1"/>
    <property type="match status" value="1"/>
</dbReference>
<dbReference type="PANTHER" id="PTHR43128">
    <property type="entry name" value="L-2-HYDROXYCARBOXYLATE DEHYDROGENASE (NAD(P)(+))"/>
    <property type="match status" value="1"/>
</dbReference>
<dbReference type="PANTHER" id="PTHR43128:SF16">
    <property type="entry name" value="L-LACTATE DEHYDROGENASE"/>
    <property type="match status" value="1"/>
</dbReference>
<dbReference type="Pfam" id="PF02866">
    <property type="entry name" value="Ldh_1_C"/>
    <property type="match status" value="1"/>
</dbReference>
<dbReference type="Pfam" id="PF00056">
    <property type="entry name" value="Ldh_1_N"/>
    <property type="match status" value="1"/>
</dbReference>
<dbReference type="PIRSF" id="PIRSF000102">
    <property type="entry name" value="Lac_mal_DH"/>
    <property type="match status" value="1"/>
</dbReference>
<dbReference type="PRINTS" id="PR00086">
    <property type="entry name" value="LLDHDRGNASE"/>
</dbReference>
<dbReference type="SUPFAM" id="SSF56327">
    <property type="entry name" value="LDH C-terminal domain-like"/>
    <property type="match status" value="1"/>
</dbReference>
<dbReference type="SUPFAM" id="SSF51735">
    <property type="entry name" value="NAD(P)-binding Rossmann-fold domains"/>
    <property type="match status" value="1"/>
</dbReference>
<comment type="function">
    <text evidence="1">Catalyzes the reversible oxidation of malate to oxaloacetate.</text>
</comment>
<comment type="catalytic activity">
    <reaction evidence="1">
        <text>(S)-malate + NAD(+) = oxaloacetate + NADH + H(+)</text>
        <dbReference type="Rhea" id="RHEA:21432"/>
        <dbReference type="ChEBI" id="CHEBI:15378"/>
        <dbReference type="ChEBI" id="CHEBI:15589"/>
        <dbReference type="ChEBI" id="CHEBI:16452"/>
        <dbReference type="ChEBI" id="CHEBI:57540"/>
        <dbReference type="ChEBI" id="CHEBI:57945"/>
        <dbReference type="EC" id="1.1.1.37"/>
    </reaction>
</comment>
<comment type="similarity">
    <text evidence="1">Belongs to the LDH/MDH superfamily. MDH type 3 family.</text>
</comment>
<evidence type="ECO:0000255" key="1">
    <source>
        <dbReference type="HAMAP-Rule" id="MF_00487"/>
    </source>
</evidence>
<proteinExistence type="inferred from homology"/>
<feature type="chain" id="PRO_0000241941" description="Malate dehydrogenase">
    <location>
        <begin position="1"/>
        <end position="321"/>
    </location>
</feature>
<feature type="active site" description="Proton acceptor" evidence="1">
    <location>
        <position position="180"/>
    </location>
</feature>
<feature type="binding site" evidence="1">
    <location>
        <begin position="13"/>
        <end position="18"/>
    </location>
    <ligand>
        <name>NAD(+)</name>
        <dbReference type="ChEBI" id="CHEBI:57540"/>
    </ligand>
</feature>
<feature type="binding site" evidence="1">
    <location>
        <position position="38"/>
    </location>
    <ligand>
        <name>NAD(+)</name>
        <dbReference type="ChEBI" id="CHEBI:57540"/>
    </ligand>
</feature>
<feature type="binding site" evidence="1">
    <location>
        <position position="87"/>
    </location>
    <ligand>
        <name>substrate</name>
    </ligand>
</feature>
<feature type="binding site" evidence="1">
    <location>
        <position position="93"/>
    </location>
    <ligand>
        <name>substrate</name>
    </ligand>
</feature>
<feature type="binding site" evidence="1">
    <location>
        <position position="100"/>
    </location>
    <ligand>
        <name>NAD(+)</name>
        <dbReference type="ChEBI" id="CHEBI:57540"/>
    </ligand>
</feature>
<feature type="binding site" evidence="1">
    <location>
        <begin position="123"/>
        <end position="125"/>
    </location>
    <ligand>
        <name>NAD(+)</name>
        <dbReference type="ChEBI" id="CHEBI:57540"/>
    </ligand>
</feature>
<feature type="binding site" evidence="1">
    <location>
        <position position="125"/>
    </location>
    <ligand>
        <name>substrate</name>
    </ligand>
</feature>
<feature type="binding site" evidence="1">
    <location>
        <position position="156"/>
    </location>
    <ligand>
        <name>substrate</name>
    </ligand>
</feature>
<sequence length="321" mass="33835">MRSHRSVKVSLVGAGNIGGTLAYMLGVAGICQELVFVDVMDGVPRGKLLDIGHALAISGVDITAVGGSDYAAIEGSDAIVVTAGLPRKEGMSREDLLMANAAVIKGVAENIRKYSPDAFVIVVTNPLDAMVWYMHQCSGLPVNKVVGMAGVLDSARFSFFLAKHMSVSVSSVSSVVLGGHGDLMLPLLKYSTVGGVSVSDLISCGRLSSEDVHAIIERTRKGGEEIVKLLKSGSAYYAPAASCMNMLESYLFDKRCVIPCSVGLDGKYGVNGGLFVGVPAVIGKNGVEEVIEYVLSQEEREIFEKSVGLISNSVKIISEQK</sequence>
<organism>
    <name type="scientific">Anaplasma phagocytophilum (strain HZ)</name>
    <dbReference type="NCBI Taxonomy" id="212042"/>
    <lineage>
        <taxon>Bacteria</taxon>
        <taxon>Pseudomonadati</taxon>
        <taxon>Pseudomonadota</taxon>
        <taxon>Alphaproteobacteria</taxon>
        <taxon>Rickettsiales</taxon>
        <taxon>Anaplasmataceae</taxon>
        <taxon>Anaplasma</taxon>
        <taxon>phagocytophilum group</taxon>
    </lineage>
</organism>
<accession>Q2GK85</accession>
<name>MDH_ANAPZ</name>
<reference key="1">
    <citation type="journal article" date="2006" name="PLoS Genet.">
        <title>Comparative genomics of emerging human ehrlichiosis agents.</title>
        <authorList>
            <person name="Dunning Hotopp J.C."/>
            <person name="Lin M."/>
            <person name="Madupu R."/>
            <person name="Crabtree J."/>
            <person name="Angiuoli S.V."/>
            <person name="Eisen J.A."/>
            <person name="Seshadri R."/>
            <person name="Ren Q."/>
            <person name="Wu M."/>
            <person name="Utterback T.R."/>
            <person name="Smith S."/>
            <person name="Lewis M."/>
            <person name="Khouri H."/>
            <person name="Zhang C."/>
            <person name="Niu H."/>
            <person name="Lin Q."/>
            <person name="Ohashi N."/>
            <person name="Zhi N."/>
            <person name="Nelson W.C."/>
            <person name="Brinkac L.M."/>
            <person name="Dodson R.J."/>
            <person name="Rosovitz M.J."/>
            <person name="Sundaram J.P."/>
            <person name="Daugherty S.C."/>
            <person name="Davidsen T."/>
            <person name="Durkin A.S."/>
            <person name="Gwinn M.L."/>
            <person name="Haft D.H."/>
            <person name="Selengut J.D."/>
            <person name="Sullivan S.A."/>
            <person name="Zafar N."/>
            <person name="Zhou L."/>
            <person name="Benahmed F."/>
            <person name="Forberger H."/>
            <person name="Halpin R."/>
            <person name="Mulligan S."/>
            <person name="Robinson J."/>
            <person name="White O."/>
            <person name="Rikihisa Y."/>
            <person name="Tettelin H."/>
        </authorList>
    </citation>
    <scope>NUCLEOTIDE SEQUENCE [LARGE SCALE GENOMIC DNA]</scope>
    <source>
        <strain>HZ</strain>
    </source>
</reference>
<keyword id="KW-0520">NAD</keyword>
<keyword id="KW-0560">Oxidoreductase</keyword>
<keyword id="KW-0816">Tricarboxylic acid cycle</keyword>
<protein>
    <recommendedName>
        <fullName evidence="1">Malate dehydrogenase</fullName>
        <ecNumber evidence="1">1.1.1.37</ecNumber>
    </recommendedName>
</protein>